<proteinExistence type="inferred from homology"/>
<organism>
    <name type="scientific">Actinobacillus pleuropneumoniae serotype 5b (strain L20)</name>
    <dbReference type="NCBI Taxonomy" id="416269"/>
    <lineage>
        <taxon>Bacteria</taxon>
        <taxon>Pseudomonadati</taxon>
        <taxon>Pseudomonadota</taxon>
        <taxon>Gammaproteobacteria</taxon>
        <taxon>Pasteurellales</taxon>
        <taxon>Pasteurellaceae</taxon>
        <taxon>Actinobacillus</taxon>
    </lineage>
</organism>
<reference key="1">
    <citation type="journal article" date="2008" name="J. Bacteriol.">
        <title>The complete genome sequence of Actinobacillus pleuropneumoniae L20 (serotype 5b).</title>
        <authorList>
            <person name="Foote S.J."/>
            <person name="Bosse J.T."/>
            <person name="Bouevitch A.B."/>
            <person name="Langford P.R."/>
            <person name="Young N.M."/>
            <person name="Nash J.H.E."/>
        </authorList>
    </citation>
    <scope>NUCLEOTIDE SEQUENCE [LARGE SCALE GENOMIC DNA]</scope>
    <source>
        <strain>L20</strain>
    </source>
</reference>
<feature type="chain" id="PRO_1000069338" description="ADP-L-glycero-D-manno-heptose-6-epimerase">
    <location>
        <begin position="1"/>
        <end position="308"/>
    </location>
</feature>
<feature type="active site" description="Proton acceptor" evidence="1">
    <location>
        <position position="140"/>
    </location>
</feature>
<feature type="active site" description="Proton acceptor" evidence="1">
    <location>
        <position position="178"/>
    </location>
</feature>
<feature type="binding site" evidence="1">
    <location>
        <begin position="10"/>
        <end position="11"/>
    </location>
    <ligand>
        <name>NADP(+)</name>
        <dbReference type="ChEBI" id="CHEBI:58349"/>
    </ligand>
</feature>
<feature type="binding site" evidence="1">
    <location>
        <begin position="31"/>
        <end position="32"/>
    </location>
    <ligand>
        <name>NADP(+)</name>
        <dbReference type="ChEBI" id="CHEBI:58349"/>
    </ligand>
</feature>
<feature type="binding site" evidence="1">
    <location>
        <position position="38"/>
    </location>
    <ligand>
        <name>NADP(+)</name>
        <dbReference type="ChEBI" id="CHEBI:58349"/>
    </ligand>
</feature>
<feature type="binding site" evidence="1">
    <location>
        <position position="53"/>
    </location>
    <ligand>
        <name>NADP(+)</name>
        <dbReference type="ChEBI" id="CHEBI:58349"/>
    </ligand>
</feature>
<feature type="binding site" evidence="1">
    <location>
        <begin position="75"/>
        <end position="79"/>
    </location>
    <ligand>
        <name>NADP(+)</name>
        <dbReference type="ChEBI" id="CHEBI:58349"/>
    </ligand>
</feature>
<feature type="binding site" evidence="1">
    <location>
        <position position="92"/>
    </location>
    <ligand>
        <name>NADP(+)</name>
        <dbReference type="ChEBI" id="CHEBI:58349"/>
    </ligand>
</feature>
<feature type="binding site" evidence="1">
    <location>
        <position position="144"/>
    </location>
    <ligand>
        <name>NADP(+)</name>
        <dbReference type="ChEBI" id="CHEBI:58349"/>
    </ligand>
</feature>
<feature type="binding site" evidence="1">
    <location>
        <position position="169"/>
    </location>
    <ligand>
        <name>substrate</name>
    </ligand>
</feature>
<feature type="binding site" evidence="1">
    <location>
        <position position="170"/>
    </location>
    <ligand>
        <name>NADP(+)</name>
        <dbReference type="ChEBI" id="CHEBI:58349"/>
    </ligand>
</feature>
<feature type="binding site" evidence="1">
    <location>
        <position position="178"/>
    </location>
    <ligand>
        <name>NADP(+)</name>
        <dbReference type="ChEBI" id="CHEBI:58349"/>
    </ligand>
</feature>
<feature type="binding site" evidence="1">
    <location>
        <position position="180"/>
    </location>
    <ligand>
        <name>substrate</name>
    </ligand>
</feature>
<feature type="binding site" evidence="1">
    <location>
        <position position="187"/>
    </location>
    <ligand>
        <name>substrate</name>
    </ligand>
</feature>
<feature type="binding site" evidence="1">
    <location>
        <begin position="201"/>
        <end position="204"/>
    </location>
    <ligand>
        <name>substrate</name>
    </ligand>
</feature>
<feature type="binding site" evidence="1">
    <location>
        <position position="209"/>
    </location>
    <ligand>
        <name>substrate</name>
    </ligand>
</feature>
<feature type="binding site" evidence="1">
    <location>
        <position position="272"/>
    </location>
    <ligand>
        <name>substrate</name>
    </ligand>
</feature>
<dbReference type="EC" id="5.1.3.20" evidence="1"/>
<dbReference type="EMBL" id="CP000569">
    <property type="protein sequence ID" value="ABN74794.1"/>
    <property type="molecule type" value="Genomic_DNA"/>
</dbReference>
<dbReference type="SMR" id="A3N308"/>
<dbReference type="STRING" id="416269.APL_1710"/>
<dbReference type="EnsemblBacteria" id="ABN74794">
    <property type="protein sequence ID" value="ABN74794"/>
    <property type="gene ID" value="APL_1710"/>
</dbReference>
<dbReference type="KEGG" id="apl:APL_1710"/>
<dbReference type="eggNOG" id="COG0451">
    <property type="taxonomic scope" value="Bacteria"/>
</dbReference>
<dbReference type="HOGENOM" id="CLU_007383_1_3_6"/>
<dbReference type="UniPathway" id="UPA00356">
    <property type="reaction ID" value="UER00440"/>
</dbReference>
<dbReference type="Proteomes" id="UP000001432">
    <property type="component" value="Chromosome"/>
</dbReference>
<dbReference type="GO" id="GO:0008712">
    <property type="term" value="F:ADP-glyceromanno-heptose 6-epimerase activity"/>
    <property type="evidence" value="ECO:0007669"/>
    <property type="project" value="UniProtKB-UniRule"/>
</dbReference>
<dbReference type="GO" id="GO:0050661">
    <property type="term" value="F:NADP binding"/>
    <property type="evidence" value="ECO:0007669"/>
    <property type="project" value="InterPro"/>
</dbReference>
<dbReference type="GO" id="GO:0097171">
    <property type="term" value="P:ADP-L-glycero-beta-D-manno-heptose biosynthetic process"/>
    <property type="evidence" value="ECO:0007669"/>
    <property type="project" value="UniProtKB-UniPathway"/>
</dbReference>
<dbReference type="GO" id="GO:0005975">
    <property type="term" value="P:carbohydrate metabolic process"/>
    <property type="evidence" value="ECO:0007669"/>
    <property type="project" value="UniProtKB-UniRule"/>
</dbReference>
<dbReference type="CDD" id="cd05248">
    <property type="entry name" value="ADP_GME_SDR_e"/>
    <property type="match status" value="1"/>
</dbReference>
<dbReference type="Gene3D" id="3.40.50.720">
    <property type="entry name" value="NAD(P)-binding Rossmann-like Domain"/>
    <property type="match status" value="1"/>
</dbReference>
<dbReference type="Gene3D" id="3.90.25.10">
    <property type="entry name" value="UDP-galactose 4-epimerase, domain 1"/>
    <property type="match status" value="1"/>
</dbReference>
<dbReference type="HAMAP" id="MF_01601">
    <property type="entry name" value="Heptose_epimerase"/>
    <property type="match status" value="1"/>
</dbReference>
<dbReference type="InterPro" id="IPR001509">
    <property type="entry name" value="Epimerase_deHydtase"/>
</dbReference>
<dbReference type="InterPro" id="IPR011912">
    <property type="entry name" value="Heptose_epim"/>
</dbReference>
<dbReference type="InterPro" id="IPR036291">
    <property type="entry name" value="NAD(P)-bd_dom_sf"/>
</dbReference>
<dbReference type="NCBIfam" id="TIGR02197">
    <property type="entry name" value="heptose_epim"/>
    <property type="match status" value="1"/>
</dbReference>
<dbReference type="NCBIfam" id="NF008360">
    <property type="entry name" value="PRK11150.1"/>
    <property type="match status" value="1"/>
</dbReference>
<dbReference type="PANTHER" id="PTHR43103:SF3">
    <property type="entry name" value="ADP-L-GLYCERO-D-MANNO-HEPTOSE-6-EPIMERASE"/>
    <property type="match status" value="1"/>
</dbReference>
<dbReference type="PANTHER" id="PTHR43103">
    <property type="entry name" value="NUCLEOSIDE-DIPHOSPHATE-SUGAR EPIMERASE"/>
    <property type="match status" value="1"/>
</dbReference>
<dbReference type="Pfam" id="PF01370">
    <property type="entry name" value="Epimerase"/>
    <property type="match status" value="1"/>
</dbReference>
<dbReference type="SUPFAM" id="SSF51735">
    <property type="entry name" value="NAD(P)-binding Rossmann-fold domains"/>
    <property type="match status" value="1"/>
</dbReference>
<evidence type="ECO:0000255" key="1">
    <source>
        <dbReference type="HAMAP-Rule" id="MF_01601"/>
    </source>
</evidence>
<gene>
    <name evidence="1" type="primary">hldD</name>
    <name type="ordered locus">APL_1710</name>
</gene>
<accession>A3N308</accession>
<keyword id="KW-0119">Carbohydrate metabolism</keyword>
<keyword id="KW-0413">Isomerase</keyword>
<keyword id="KW-0521">NADP</keyword>
<keyword id="KW-1185">Reference proteome</keyword>
<comment type="function">
    <text evidence="1">Catalyzes the interconversion between ADP-D-glycero-beta-D-manno-heptose and ADP-L-glycero-beta-D-manno-heptose via an epimerization at carbon 6 of the heptose.</text>
</comment>
<comment type="catalytic activity">
    <reaction evidence="1">
        <text>ADP-D-glycero-beta-D-manno-heptose = ADP-L-glycero-beta-D-manno-heptose</text>
        <dbReference type="Rhea" id="RHEA:17577"/>
        <dbReference type="ChEBI" id="CHEBI:59967"/>
        <dbReference type="ChEBI" id="CHEBI:61506"/>
        <dbReference type="EC" id="5.1.3.20"/>
    </reaction>
</comment>
<comment type="cofactor">
    <cofactor evidence="1">
        <name>NADP(+)</name>
        <dbReference type="ChEBI" id="CHEBI:58349"/>
    </cofactor>
    <text evidence="1">Binds 1 NADP(+) per subunit.</text>
</comment>
<comment type="pathway">
    <text evidence="1">Nucleotide-sugar biosynthesis; ADP-L-glycero-beta-D-manno-heptose biosynthesis; ADP-L-glycero-beta-D-manno-heptose from D-glycero-beta-D-manno-heptose 7-phosphate: step 4/4.</text>
</comment>
<comment type="subunit">
    <text evidence="1">Homopentamer.</text>
</comment>
<comment type="domain">
    <text evidence="1">Contains a large N-terminal NADP-binding domain, and a smaller C-terminal substrate-binding domain.</text>
</comment>
<comment type="similarity">
    <text evidence="1">Belongs to the NAD(P)-dependent epimerase/dehydratase family. HldD subfamily.</text>
</comment>
<protein>
    <recommendedName>
        <fullName evidence="1">ADP-L-glycero-D-manno-heptose-6-epimerase</fullName>
        <ecNumber evidence="1">5.1.3.20</ecNumber>
    </recommendedName>
    <alternativeName>
        <fullName evidence="1">ADP-L-glycero-beta-D-manno-heptose-6-epimerase</fullName>
        <shortName evidence="1">ADP-glyceromanno-heptose 6-epimerase</shortName>
        <shortName evidence="1">ADP-hep 6-epimerase</shortName>
        <shortName evidence="1">AGME</shortName>
    </alternativeName>
</protein>
<sequence>MIIVTGGFGMIGSNIVKALNEIGRKDILVVDNLKNGEKFVNLVDLDIADYCDKEDFIASIIAGDDFGEIDAVFHEGACSATTEWDGKYLMHNNYEYSKELLHFCLDHQIPFFYASSAATYGGRSDNFIEERKFEQPLNAYGYSKFLFDEYVRQVLPEADSPVCGFKYFNVYGPREQHKGSMASVAFHLNNQMLKGENPKLFEGSETFLRDFVYVEDVAKVNIWAWQNGISGIYNLGTGKAESFQAVAQAVIDFHGKGEIEKIPFPDHLKSRYQTFTQADLTKLRAAGYTGTFKTVAEGTKEYMAWLNR</sequence>
<name>HLDD_ACTP2</name>